<proteinExistence type="inferred from homology"/>
<feature type="chain" id="PRO_1000038780" description="Lipoprotein signal peptidase">
    <location>
        <begin position="1"/>
        <end position="187"/>
    </location>
</feature>
<feature type="transmembrane region" description="Helical" evidence="1">
    <location>
        <begin position="12"/>
        <end position="32"/>
    </location>
</feature>
<feature type="transmembrane region" description="Helical" evidence="1">
    <location>
        <begin position="68"/>
        <end position="88"/>
    </location>
</feature>
<feature type="transmembrane region" description="Helical" evidence="1">
    <location>
        <begin position="91"/>
        <end position="111"/>
    </location>
</feature>
<feature type="transmembrane region" description="Helical" evidence="1">
    <location>
        <begin position="141"/>
        <end position="161"/>
    </location>
</feature>
<feature type="region of interest" description="Disordered" evidence="2">
    <location>
        <begin position="167"/>
        <end position="187"/>
    </location>
</feature>
<feature type="active site" evidence="1">
    <location>
        <position position="127"/>
    </location>
</feature>
<feature type="active site" evidence="1">
    <location>
        <position position="140"/>
    </location>
</feature>
<evidence type="ECO:0000255" key="1">
    <source>
        <dbReference type="HAMAP-Rule" id="MF_00161"/>
    </source>
</evidence>
<evidence type="ECO:0000256" key="2">
    <source>
        <dbReference type="SAM" id="MobiDB-lite"/>
    </source>
</evidence>
<name>LSPA_BIFAA</name>
<dbReference type="EC" id="3.4.23.36" evidence="1"/>
<dbReference type="EMBL" id="AP009256">
    <property type="protein sequence ID" value="BAF39913.1"/>
    <property type="molecule type" value="Genomic_DNA"/>
</dbReference>
<dbReference type="RefSeq" id="WP_011743467.1">
    <property type="nucleotide sequence ID" value="NC_008618.1"/>
</dbReference>
<dbReference type="SMR" id="A1A2I0"/>
<dbReference type="STRING" id="367928.BAD_1132"/>
<dbReference type="PaxDb" id="1680-BADO_1190"/>
<dbReference type="GeneID" id="4556353"/>
<dbReference type="KEGG" id="bad:BAD_1132"/>
<dbReference type="HOGENOM" id="CLU_083252_2_3_11"/>
<dbReference type="UniPathway" id="UPA00665"/>
<dbReference type="Proteomes" id="UP000008702">
    <property type="component" value="Chromosome"/>
</dbReference>
<dbReference type="GO" id="GO:0005886">
    <property type="term" value="C:plasma membrane"/>
    <property type="evidence" value="ECO:0007669"/>
    <property type="project" value="UniProtKB-SubCell"/>
</dbReference>
<dbReference type="GO" id="GO:0004190">
    <property type="term" value="F:aspartic-type endopeptidase activity"/>
    <property type="evidence" value="ECO:0007669"/>
    <property type="project" value="UniProtKB-UniRule"/>
</dbReference>
<dbReference type="GO" id="GO:0006508">
    <property type="term" value="P:proteolysis"/>
    <property type="evidence" value="ECO:0007669"/>
    <property type="project" value="UniProtKB-KW"/>
</dbReference>
<dbReference type="HAMAP" id="MF_00161">
    <property type="entry name" value="LspA"/>
    <property type="match status" value="1"/>
</dbReference>
<dbReference type="InterPro" id="IPR001872">
    <property type="entry name" value="Peptidase_A8"/>
</dbReference>
<dbReference type="NCBIfam" id="TIGR00077">
    <property type="entry name" value="lspA"/>
    <property type="match status" value="1"/>
</dbReference>
<dbReference type="NCBIfam" id="NF011353">
    <property type="entry name" value="PRK14771.1"/>
    <property type="match status" value="1"/>
</dbReference>
<dbReference type="PANTHER" id="PTHR33695">
    <property type="entry name" value="LIPOPROTEIN SIGNAL PEPTIDASE"/>
    <property type="match status" value="1"/>
</dbReference>
<dbReference type="PANTHER" id="PTHR33695:SF1">
    <property type="entry name" value="LIPOPROTEIN SIGNAL PEPTIDASE"/>
    <property type="match status" value="1"/>
</dbReference>
<dbReference type="Pfam" id="PF01252">
    <property type="entry name" value="Peptidase_A8"/>
    <property type="match status" value="1"/>
</dbReference>
<dbReference type="PRINTS" id="PR00781">
    <property type="entry name" value="LIPOSIGPTASE"/>
</dbReference>
<comment type="function">
    <text evidence="1">This protein specifically catalyzes the removal of signal peptides from prolipoproteins.</text>
</comment>
<comment type="catalytic activity">
    <reaction evidence="1">
        <text>Release of signal peptides from bacterial membrane prolipoproteins. Hydrolyzes -Xaa-Yaa-Zaa-|-(S,diacylglyceryl)Cys-, in which Xaa is hydrophobic (preferably Leu), and Yaa (Ala or Ser) and Zaa (Gly or Ala) have small, neutral side chains.</text>
        <dbReference type="EC" id="3.4.23.36"/>
    </reaction>
</comment>
<comment type="pathway">
    <text evidence="1">Protein modification; lipoprotein biosynthesis (signal peptide cleavage).</text>
</comment>
<comment type="subcellular location">
    <subcellularLocation>
        <location evidence="1">Cell membrane</location>
        <topology evidence="1">Multi-pass membrane protein</topology>
    </subcellularLocation>
</comment>
<comment type="similarity">
    <text evidence="1">Belongs to the peptidase A8 family.</text>
</comment>
<sequence length="187" mass="19855">MKNDQRRLRDRVAVFACIAIAAIAIDQLTKMWALSALADGRTIRVIPGLLSLTLVRNPGASLGMGSGMTWLISLLAMAACVALVVLAVRTISMKWTVLFAFAFAGAFGNLIDRVIYAEGFLNGKVVDFLNYGWSIGNVADIFLMLAGVAAVLLLFLGEPFSQKDLDEANGKTLGDDANATDDGAKAA</sequence>
<reference key="1">
    <citation type="submission" date="2006-12" db="EMBL/GenBank/DDBJ databases">
        <title>Bifidobacterium adolescentis complete genome sequence.</title>
        <authorList>
            <person name="Suzuki T."/>
            <person name="Tsuda Y."/>
            <person name="Kanou N."/>
            <person name="Inoue T."/>
            <person name="Kumazaki K."/>
            <person name="Nagano S."/>
            <person name="Hirai S."/>
            <person name="Tanaka K."/>
            <person name="Watanabe K."/>
        </authorList>
    </citation>
    <scope>NUCLEOTIDE SEQUENCE [LARGE SCALE GENOMIC DNA]</scope>
    <source>
        <strain>ATCC 15703 / DSM 20083 / NCTC 11814 / E194a</strain>
    </source>
</reference>
<keyword id="KW-0064">Aspartyl protease</keyword>
<keyword id="KW-1003">Cell membrane</keyword>
<keyword id="KW-0378">Hydrolase</keyword>
<keyword id="KW-0472">Membrane</keyword>
<keyword id="KW-0645">Protease</keyword>
<keyword id="KW-1185">Reference proteome</keyword>
<keyword id="KW-0812">Transmembrane</keyword>
<keyword id="KW-1133">Transmembrane helix</keyword>
<organism>
    <name type="scientific">Bifidobacterium adolescentis (strain ATCC 15703 / DSM 20083 / NCTC 11814 / E194a)</name>
    <dbReference type="NCBI Taxonomy" id="367928"/>
    <lineage>
        <taxon>Bacteria</taxon>
        <taxon>Bacillati</taxon>
        <taxon>Actinomycetota</taxon>
        <taxon>Actinomycetes</taxon>
        <taxon>Bifidobacteriales</taxon>
        <taxon>Bifidobacteriaceae</taxon>
        <taxon>Bifidobacterium</taxon>
    </lineage>
</organism>
<gene>
    <name evidence="1" type="primary">lspA</name>
    <name type="ordered locus">BAD_1132</name>
</gene>
<protein>
    <recommendedName>
        <fullName evidence="1">Lipoprotein signal peptidase</fullName>
        <ecNumber evidence="1">3.4.23.36</ecNumber>
    </recommendedName>
    <alternativeName>
        <fullName evidence="1">Prolipoprotein signal peptidase</fullName>
    </alternativeName>
    <alternativeName>
        <fullName evidence="1">Signal peptidase II</fullName>
        <shortName evidence="1">SPase II</shortName>
    </alternativeName>
</protein>
<accession>A1A2I0</accession>